<keyword id="KW-1185">Reference proteome</keyword>
<keyword id="KW-0687">Ribonucleoprotein</keyword>
<keyword id="KW-0689">Ribosomal protein</keyword>
<keyword id="KW-0694">RNA-binding</keyword>
<keyword id="KW-0699">rRNA-binding</keyword>
<accession>A5GIU0</accession>
<organism>
    <name type="scientific">Synechococcus sp. (strain WH7803)</name>
    <dbReference type="NCBI Taxonomy" id="32051"/>
    <lineage>
        <taxon>Bacteria</taxon>
        <taxon>Bacillati</taxon>
        <taxon>Cyanobacteriota</taxon>
        <taxon>Cyanophyceae</taxon>
        <taxon>Synechococcales</taxon>
        <taxon>Synechococcaceae</taxon>
        <taxon>Synechococcus</taxon>
    </lineage>
</organism>
<sequence>MTTSSPTATTAQAHGRFIRGSVSKVRRVLDQIRGRTYRDALIMLEFMPYRSTGPITKVLRSAVANAEHNLGLDPSTLVISQASADMGPSMKRYRPRAQGRAYAIKKQTCHISIAVASQTDS</sequence>
<gene>
    <name evidence="1" type="primary">rplV</name>
    <name evidence="1" type="synonym">rpl22</name>
    <name type="ordered locus">SynWH7803_0429</name>
</gene>
<comment type="function">
    <text evidence="1">This protein binds specifically to 23S rRNA; its binding is stimulated by other ribosomal proteins, e.g. L4, L17, and L20. It is important during the early stages of 50S assembly. It makes multiple contacts with different domains of the 23S rRNA in the assembled 50S subunit and ribosome (By similarity).</text>
</comment>
<comment type="function">
    <text evidence="1">The globular domain of the protein is located near the polypeptide exit tunnel on the outside of the subunit, while an extended beta-hairpin is found that lines the wall of the exit tunnel in the center of the 70S ribosome.</text>
</comment>
<comment type="subunit">
    <text evidence="1">Part of the 50S ribosomal subunit.</text>
</comment>
<comment type="similarity">
    <text evidence="1">Belongs to the universal ribosomal protein uL22 family.</text>
</comment>
<reference key="1">
    <citation type="submission" date="2006-05" db="EMBL/GenBank/DDBJ databases">
        <authorList>
            <consortium name="Genoscope"/>
        </authorList>
    </citation>
    <scope>NUCLEOTIDE SEQUENCE [LARGE SCALE GENOMIC DNA]</scope>
    <source>
        <strain>WH7803</strain>
    </source>
</reference>
<name>RL22_SYNPW</name>
<feature type="chain" id="PRO_0000354526" description="Large ribosomal subunit protein uL22">
    <location>
        <begin position="1"/>
        <end position="121"/>
    </location>
</feature>
<protein>
    <recommendedName>
        <fullName evidence="1">Large ribosomal subunit protein uL22</fullName>
    </recommendedName>
    <alternativeName>
        <fullName evidence="2">50S ribosomal protein L22</fullName>
    </alternativeName>
</protein>
<proteinExistence type="inferred from homology"/>
<evidence type="ECO:0000255" key="1">
    <source>
        <dbReference type="HAMAP-Rule" id="MF_01331"/>
    </source>
</evidence>
<evidence type="ECO:0000305" key="2"/>
<dbReference type="EMBL" id="CT971583">
    <property type="protein sequence ID" value="CAK22855.1"/>
    <property type="molecule type" value="Genomic_DNA"/>
</dbReference>
<dbReference type="SMR" id="A5GIU0"/>
<dbReference type="STRING" id="32051.SynWH7803_0429"/>
<dbReference type="KEGG" id="syx:SynWH7803_0429"/>
<dbReference type="eggNOG" id="COG0091">
    <property type="taxonomic scope" value="Bacteria"/>
</dbReference>
<dbReference type="HOGENOM" id="CLU_083987_3_2_3"/>
<dbReference type="OrthoDB" id="9805969at2"/>
<dbReference type="Proteomes" id="UP000001566">
    <property type="component" value="Chromosome"/>
</dbReference>
<dbReference type="GO" id="GO:0022625">
    <property type="term" value="C:cytosolic large ribosomal subunit"/>
    <property type="evidence" value="ECO:0007669"/>
    <property type="project" value="TreeGrafter"/>
</dbReference>
<dbReference type="GO" id="GO:0019843">
    <property type="term" value="F:rRNA binding"/>
    <property type="evidence" value="ECO:0007669"/>
    <property type="project" value="UniProtKB-UniRule"/>
</dbReference>
<dbReference type="GO" id="GO:0003735">
    <property type="term" value="F:structural constituent of ribosome"/>
    <property type="evidence" value="ECO:0007669"/>
    <property type="project" value="InterPro"/>
</dbReference>
<dbReference type="GO" id="GO:0006412">
    <property type="term" value="P:translation"/>
    <property type="evidence" value="ECO:0007669"/>
    <property type="project" value="UniProtKB-UniRule"/>
</dbReference>
<dbReference type="CDD" id="cd00336">
    <property type="entry name" value="Ribosomal_L22"/>
    <property type="match status" value="1"/>
</dbReference>
<dbReference type="Gene3D" id="3.90.470.10">
    <property type="entry name" value="Ribosomal protein L22/L17"/>
    <property type="match status" value="1"/>
</dbReference>
<dbReference type="HAMAP" id="MF_01331_B">
    <property type="entry name" value="Ribosomal_uL22_B"/>
    <property type="match status" value="1"/>
</dbReference>
<dbReference type="InterPro" id="IPR001063">
    <property type="entry name" value="Ribosomal_uL22"/>
</dbReference>
<dbReference type="InterPro" id="IPR005727">
    <property type="entry name" value="Ribosomal_uL22_bac/chlpt-type"/>
</dbReference>
<dbReference type="InterPro" id="IPR047867">
    <property type="entry name" value="Ribosomal_uL22_bac/org-type"/>
</dbReference>
<dbReference type="InterPro" id="IPR018260">
    <property type="entry name" value="Ribosomal_uL22_CS"/>
</dbReference>
<dbReference type="InterPro" id="IPR036394">
    <property type="entry name" value="Ribosomal_uL22_sf"/>
</dbReference>
<dbReference type="NCBIfam" id="TIGR01044">
    <property type="entry name" value="rplV_bact"/>
    <property type="match status" value="1"/>
</dbReference>
<dbReference type="PANTHER" id="PTHR13501">
    <property type="entry name" value="CHLOROPLAST 50S RIBOSOMAL PROTEIN L22-RELATED"/>
    <property type="match status" value="1"/>
</dbReference>
<dbReference type="PANTHER" id="PTHR13501:SF8">
    <property type="entry name" value="LARGE RIBOSOMAL SUBUNIT PROTEIN UL22M"/>
    <property type="match status" value="1"/>
</dbReference>
<dbReference type="Pfam" id="PF00237">
    <property type="entry name" value="Ribosomal_L22"/>
    <property type="match status" value="1"/>
</dbReference>
<dbReference type="SUPFAM" id="SSF54843">
    <property type="entry name" value="Ribosomal protein L22"/>
    <property type="match status" value="1"/>
</dbReference>
<dbReference type="PROSITE" id="PS00464">
    <property type="entry name" value="RIBOSOMAL_L22"/>
    <property type="match status" value="1"/>
</dbReference>